<name>ORC2_YEAST</name>
<gene>
    <name type="primary">ORC2</name>
    <name type="synonym">RRR1</name>
    <name type="synonym">SIR5</name>
    <name type="ordered locus">YBR060C</name>
    <name type="ORF">YBR0523</name>
</gene>
<sequence>MLNGEDFVEHNDILSSPAKSRNVTPKRVDPHGERQLRRIHSSKKNLLERISLVGNERKNTSPDPALKPKTPSKAPRKRGRPRKIQEELTDRIKKDEKDTISSKKKRKLDKDTSGNVNEESKTSNNKQVMEKTGIKEKREREKIQVATTTYEDNVTPQTDDNFVSNSPEPPEPATPSKKSLTTNHDFTSPLKQIIMNNLKEYKDSTSPGKLTLSRNFTPTPVPKNKKLYQTSETKSASSFLDTFEGYFDQRKIVRTNAKSRHTMSMAPDVTREEFSLVSNFFNENFQKRPRQKLFEIQKKMFPQYWFELTQGFSLLFYGVGSKRNFLEEFAIDYLSPKIAYSQLAYENELQQNKPVNSIPCLILNGYNPSCNYRDVFKEITDLLVPAELTRSETKYWGNHVILQIQKMIDFYKNQPLDIKLILVVHNLDGPSIRKNTFQTMLSFLSVIRQIAIVASTDHIYAPLLWDNMKAQNYNFVFHDISNFEPSTVESTFQDVMKMGKSDTSSGAEGAKYVLQSLTVNSKKMYKLLIETQMQNMGNLSANTGPKRGTQRTGVELKLFNHLCAADFIASNEIALRSMLREFIEHKMANITKNNSGMEIIWVPYTYAELEKLLKTVLNTL</sequence>
<accession>P32833</accession>
<accession>D6VQ60</accession>
<protein>
    <recommendedName>
        <fullName>Origin recognition complex subunit 2</fullName>
    </recommendedName>
    <alternativeName>
        <fullName>Origin recognition complex 71 kDa subunit</fullName>
    </alternativeName>
</protein>
<evidence type="ECO:0000256" key="1">
    <source>
        <dbReference type="SAM" id="MobiDB-lite"/>
    </source>
</evidence>
<evidence type="ECO:0000269" key="2">
    <source>
    </source>
</evidence>
<evidence type="ECO:0000269" key="3">
    <source>
    </source>
</evidence>
<evidence type="ECO:0000269" key="4">
    <source>
    </source>
</evidence>
<evidence type="ECO:0000305" key="5"/>
<evidence type="ECO:0007744" key="6">
    <source>
    </source>
</evidence>
<evidence type="ECO:0007829" key="7">
    <source>
        <dbReference type="PDB" id="5ZR1"/>
    </source>
</evidence>
<evidence type="ECO:0007829" key="8">
    <source>
        <dbReference type="PDB" id="7TJH"/>
    </source>
</evidence>
<proteinExistence type="evidence at protein level"/>
<keyword id="KW-0002">3D-structure</keyword>
<keyword id="KW-0903">Direct protein sequencing</keyword>
<keyword id="KW-0235">DNA replication</keyword>
<keyword id="KW-0539">Nucleus</keyword>
<keyword id="KW-0597">Phosphoprotein</keyword>
<keyword id="KW-1185">Reference proteome</keyword>
<organism>
    <name type="scientific">Saccharomyces cerevisiae (strain ATCC 204508 / S288c)</name>
    <name type="common">Baker's yeast</name>
    <dbReference type="NCBI Taxonomy" id="559292"/>
    <lineage>
        <taxon>Eukaryota</taxon>
        <taxon>Fungi</taxon>
        <taxon>Dikarya</taxon>
        <taxon>Ascomycota</taxon>
        <taxon>Saccharomycotina</taxon>
        <taxon>Saccharomycetes</taxon>
        <taxon>Saccharomycetales</taxon>
        <taxon>Saccharomycetaceae</taxon>
        <taxon>Saccharomyces</taxon>
    </lineage>
</organism>
<reference key="1">
    <citation type="journal article" date="1993" name="Science">
        <title>Origin recognition complex (ORC) in transcriptional silencing and DNA replication in S. cerevisiae.</title>
        <authorList>
            <person name="Foss M."/>
            <person name="McNally F.J."/>
            <person name="Laurenson P."/>
            <person name="Rine J."/>
        </authorList>
    </citation>
    <scope>NUCLEOTIDE SEQUENCE</scope>
</reference>
<reference key="2">
    <citation type="journal article" date="1993" name="Nature">
        <title>Yeast origin recognition complex is involved in DNA replication and transcriptional silencing.</title>
        <authorList>
            <person name="Micklem G."/>
            <person name="Rowley A."/>
            <person name="Harwood J."/>
            <person name="Nasmyth K."/>
            <person name="Diffley J.F.X."/>
        </authorList>
    </citation>
    <scope>NUCLEOTIDE SEQUENCE [GENOMIC DNA]</scope>
</reference>
<reference key="3">
    <citation type="journal article" date="1994" name="EMBO J.">
        <title>Complete DNA sequence of yeast chromosome II.</title>
        <authorList>
            <person name="Feldmann H."/>
            <person name="Aigle M."/>
            <person name="Aljinovic G."/>
            <person name="Andre B."/>
            <person name="Baclet M.C."/>
            <person name="Barthe C."/>
            <person name="Baur A."/>
            <person name="Becam A.-M."/>
            <person name="Biteau N."/>
            <person name="Boles E."/>
            <person name="Brandt T."/>
            <person name="Brendel M."/>
            <person name="Brueckner M."/>
            <person name="Bussereau F."/>
            <person name="Christiansen C."/>
            <person name="Contreras R."/>
            <person name="Crouzet M."/>
            <person name="Cziepluch C."/>
            <person name="Demolis N."/>
            <person name="Delaveau T."/>
            <person name="Doignon F."/>
            <person name="Domdey H."/>
            <person name="Duesterhus S."/>
            <person name="Dubois E."/>
            <person name="Dujon B."/>
            <person name="El Bakkoury M."/>
            <person name="Entian K.-D."/>
            <person name="Feuermann M."/>
            <person name="Fiers W."/>
            <person name="Fobo G.M."/>
            <person name="Fritz C."/>
            <person name="Gassenhuber J."/>
            <person name="Glansdorff N."/>
            <person name="Goffeau A."/>
            <person name="Grivell L.A."/>
            <person name="de Haan M."/>
            <person name="Hein C."/>
            <person name="Herbert C.J."/>
            <person name="Hollenberg C.P."/>
            <person name="Holmstroem K."/>
            <person name="Jacq C."/>
            <person name="Jacquet M."/>
            <person name="Jauniaux J.-C."/>
            <person name="Jonniaux J.-L."/>
            <person name="Kallesoee T."/>
            <person name="Kiesau P."/>
            <person name="Kirchrath L."/>
            <person name="Koetter P."/>
            <person name="Korol S."/>
            <person name="Liebl S."/>
            <person name="Logghe M."/>
            <person name="Lohan A.J.E."/>
            <person name="Louis E.J."/>
            <person name="Li Z.Y."/>
            <person name="Maat M.J."/>
            <person name="Mallet L."/>
            <person name="Mannhaupt G."/>
            <person name="Messenguy F."/>
            <person name="Miosga T."/>
            <person name="Molemans F."/>
            <person name="Mueller S."/>
            <person name="Nasr F."/>
            <person name="Obermaier B."/>
            <person name="Perea J."/>
            <person name="Pierard A."/>
            <person name="Piravandi E."/>
            <person name="Pohl F.M."/>
            <person name="Pohl T.M."/>
            <person name="Potier S."/>
            <person name="Proft M."/>
            <person name="Purnelle B."/>
            <person name="Ramezani Rad M."/>
            <person name="Rieger M."/>
            <person name="Rose M."/>
            <person name="Schaaff-Gerstenschlaeger I."/>
            <person name="Scherens B."/>
            <person name="Schwarzlose C."/>
            <person name="Skala J."/>
            <person name="Slonimski P.P."/>
            <person name="Smits P.H.M."/>
            <person name="Souciet J.-L."/>
            <person name="Steensma H.Y."/>
            <person name="Stucka R."/>
            <person name="Urrestarazu L.A."/>
            <person name="van der Aart Q.J.M."/>
            <person name="Van Dyck L."/>
            <person name="Vassarotti A."/>
            <person name="Vetter I."/>
            <person name="Vierendeels F."/>
            <person name="Vissers S."/>
            <person name="Wagner G."/>
            <person name="de Wergifosse P."/>
            <person name="Wolfe K.H."/>
            <person name="Zagulski M."/>
            <person name="Zimmermann F.K."/>
            <person name="Mewes H.-W."/>
            <person name="Kleine K."/>
        </authorList>
    </citation>
    <scope>NUCLEOTIDE SEQUENCE [LARGE SCALE GENOMIC DNA]</scope>
    <source>
        <strain>ATCC 204508 / S288c</strain>
    </source>
</reference>
<reference key="4">
    <citation type="journal article" date="2014" name="G3 (Bethesda)">
        <title>The reference genome sequence of Saccharomyces cerevisiae: Then and now.</title>
        <authorList>
            <person name="Engel S.R."/>
            <person name="Dietrich F.S."/>
            <person name="Fisk D.G."/>
            <person name="Binkley G."/>
            <person name="Balakrishnan R."/>
            <person name="Costanzo M.C."/>
            <person name="Dwight S.S."/>
            <person name="Hitz B.C."/>
            <person name="Karra K."/>
            <person name="Nash R.S."/>
            <person name="Weng S."/>
            <person name="Wong E.D."/>
            <person name="Lloyd P."/>
            <person name="Skrzypek M.S."/>
            <person name="Miyasato S.R."/>
            <person name="Simison M."/>
            <person name="Cherry J.M."/>
        </authorList>
    </citation>
    <scope>GENOME REANNOTATION</scope>
    <source>
        <strain>ATCC 204508 / S288c</strain>
    </source>
</reference>
<reference key="5">
    <citation type="journal article" date="1993" name="Science">
        <title>Yeast origin recognition complex functions in transcription silencing and DNA replication.</title>
        <authorList>
            <person name="Bell S.P."/>
            <person name="Kobayashi R."/>
            <person name="Stillman B."/>
        </authorList>
    </citation>
    <scope>PARTIAL PROTEIN SEQUENCE</scope>
    <scope>CHARACTERIZATION</scope>
</reference>
<reference key="6">
    <citation type="journal article" date="2000" name="Genes Cells">
        <title>Interactions between Mcm10p and other replication factors are required for proper initiation and elongation of chromosomal DNA replication in Saccharomyces cerevisiae.</title>
        <authorList>
            <person name="Kawasaki Y."/>
            <person name="Hiraga S."/>
            <person name="Sugino A."/>
        </authorList>
    </citation>
    <scope>INTERACTION MCM10</scope>
</reference>
<reference key="7">
    <citation type="journal article" date="2007" name="FEMS Yeast Res.">
        <title>Interaction between ORC and Cdt1p of Saccharomyces cerevisiae.</title>
        <authorList>
            <person name="Asano T."/>
            <person name="Makise M."/>
            <person name="Takehara M."/>
            <person name="Mizushima T."/>
        </authorList>
    </citation>
    <scope>FUNCTION</scope>
    <scope>INTERACTION WITH TAH11</scope>
</reference>
<reference key="8">
    <citation type="journal article" date="2003" name="Nature">
        <title>Global analysis of protein expression in yeast.</title>
        <authorList>
            <person name="Ghaemmaghami S."/>
            <person name="Huh W.-K."/>
            <person name="Bower K."/>
            <person name="Howson R.W."/>
            <person name="Belle A."/>
            <person name="Dephoure N."/>
            <person name="O'Shea E.K."/>
            <person name="Weissman J.S."/>
        </authorList>
    </citation>
    <scope>LEVEL OF PROTEIN EXPRESSION [LARGE SCALE ANALYSIS]</scope>
</reference>
<reference key="9">
    <citation type="journal article" date="2008" name="Mol. Cell. Proteomics">
        <title>A multidimensional chromatography technology for in-depth phosphoproteome analysis.</title>
        <authorList>
            <person name="Albuquerque C.P."/>
            <person name="Smolka M.B."/>
            <person name="Payne S.H."/>
            <person name="Bafna V."/>
            <person name="Eng J."/>
            <person name="Zhou H."/>
        </authorList>
    </citation>
    <scope>IDENTIFICATION BY MASS SPECTROMETRY [LARGE SCALE ANALYSIS]</scope>
</reference>
<reference key="10">
    <citation type="journal article" date="2009" name="Science">
        <title>Global analysis of Cdk1 substrate phosphorylation sites provides insights into evolution.</title>
        <authorList>
            <person name="Holt L.J."/>
            <person name="Tuch B.B."/>
            <person name="Villen J."/>
            <person name="Johnson A.D."/>
            <person name="Gygi S.P."/>
            <person name="Morgan D.O."/>
        </authorList>
    </citation>
    <scope>PHOSPHORYLATION [LARGE SCALE ANALYSIS] AT THR-60; THR-187 AND SER-188</scope>
    <scope>IDENTIFICATION BY MASS SPECTROMETRY [LARGE SCALE ANALYSIS]</scope>
</reference>
<comment type="function">
    <text evidence="4">Component of the origin recognition complex (ORC) that binds origins of replication. It has a role in both chromosomal replication and mating type transcriptional silencing. Binds to the ARS consensus sequence (ACS) of origins of replication.</text>
</comment>
<comment type="subunit">
    <text evidence="2 4">Component of the origin recognition complex (ORC) composed of at least ORC1, ORC2, ORC3, ORC4, ORC5 and ORC6. Interacts with MCM10 and TAH11.</text>
</comment>
<comment type="interaction">
    <interactant intactId="EBI-12572">
        <id>P32833</id>
    </interactant>
    <interactant intactId="EBI-12576">
        <id>P54790</id>
        <label>ORC3</label>
    </interactant>
    <organismsDiffer>false</organismsDiffer>
    <experiments>7</experiments>
</comment>
<comment type="interaction">
    <interactant intactId="EBI-12572">
        <id>P32833</id>
    </interactant>
    <interactant intactId="EBI-12584">
        <id>P50874</id>
        <label>ORC5</label>
    </interactant>
    <organismsDiffer>false</organismsDiffer>
    <experiments>5</experiments>
</comment>
<comment type="interaction">
    <interactant intactId="EBI-12572">
        <id>P32833</id>
    </interactant>
    <interactant intactId="EBI-12588">
        <id>P38826</id>
        <label>ORC6</label>
    </interactant>
    <organismsDiffer>false</organismsDiffer>
    <experiments>7</experiments>
</comment>
<comment type="subcellular location">
    <subcellularLocation>
        <location>Nucleus</location>
    </subcellularLocation>
</comment>
<comment type="miscellaneous">
    <text evidence="3">Present with 1700 molecules/cell in log phase SD medium.</text>
</comment>
<comment type="similarity">
    <text evidence="5">Belongs to the ORC2 family.</text>
</comment>
<dbReference type="EMBL" id="L23924">
    <property type="protein sequence ID" value="AAA16325.1"/>
    <property type="molecule type" value="Unassigned_DNA"/>
</dbReference>
<dbReference type="EMBL" id="Z21817">
    <property type="protein sequence ID" value="CAA79883.1"/>
    <property type="molecule type" value="Genomic_DNA"/>
</dbReference>
<dbReference type="EMBL" id="Z35929">
    <property type="protein sequence ID" value="CAA85003.1"/>
    <property type="molecule type" value="Genomic_DNA"/>
</dbReference>
<dbReference type="EMBL" id="BK006936">
    <property type="protein sequence ID" value="DAA07180.1"/>
    <property type="molecule type" value="Genomic_DNA"/>
</dbReference>
<dbReference type="PIR" id="S38994">
    <property type="entry name" value="S38994"/>
</dbReference>
<dbReference type="RefSeq" id="NP_009616.1">
    <property type="nucleotide sequence ID" value="NM_001178408.1"/>
</dbReference>
<dbReference type="PDB" id="5V8F">
    <property type="method" value="EM"/>
    <property type="resolution" value="3.90 A"/>
    <property type="chains" value="B=1-620"/>
</dbReference>
<dbReference type="PDB" id="5ZR1">
    <property type="method" value="EM"/>
    <property type="resolution" value="3.00 A"/>
    <property type="chains" value="B=1-620"/>
</dbReference>
<dbReference type="PDB" id="6RQC">
    <property type="method" value="EM"/>
    <property type="resolution" value="4.40 A"/>
    <property type="chains" value="B=1-620"/>
</dbReference>
<dbReference type="PDB" id="6WGC">
    <property type="method" value="EM"/>
    <property type="resolution" value="4.30 A"/>
    <property type="chains" value="B=1-620"/>
</dbReference>
<dbReference type="PDB" id="6WGG">
    <property type="method" value="EM"/>
    <property type="resolution" value="8.10 A"/>
    <property type="chains" value="B=1-620"/>
</dbReference>
<dbReference type="PDB" id="6WGI">
    <property type="method" value="EM"/>
    <property type="resolution" value="10.00 A"/>
    <property type="chains" value="B=1-620"/>
</dbReference>
<dbReference type="PDB" id="7MCA">
    <property type="method" value="EM"/>
    <property type="resolution" value="3.60 A"/>
    <property type="chains" value="B=1-620"/>
</dbReference>
<dbReference type="PDB" id="7TJF">
    <property type="method" value="EM"/>
    <property type="resolution" value="2.60 A"/>
    <property type="chains" value="B=1-620"/>
</dbReference>
<dbReference type="PDB" id="7TJH">
    <property type="method" value="EM"/>
    <property type="resolution" value="2.50 A"/>
    <property type="chains" value="B=1-620"/>
</dbReference>
<dbReference type="PDB" id="7TJI">
    <property type="method" value="EM"/>
    <property type="resolution" value="2.70 A"/>
    <property type="chains" value="B=1-620"/>
</dbReference>
<dbReference type="PDB" id="7TJJ">
    <property type="method" value="EM"/>
    <property type="resolution" value="2.70 A"/>
    <property type="chains" value="B=1-620"/>
</dbReference>
<dbReference type="PDB" id="7TJK">
    <property type="method" value="EM"/>
    <property type="resolution" value="2.70 A"/>
    <property type="chains" value="B=1-620"/>
</dbReference>
<dbReference type="PDB" id="9BCX">
    <property type="method" value="EM"/>
    <property type="resolution" value="6.10 A"/>
    <property type="chains" value="C=1-620"/>
</dbReference>
<dbReference type="PDB" id="9GJP">
    <property type="method" value="EM"/>
    <property type="resolution" value="3.40 A"/>
    <property type="chains" value="B=1-620"/>
</dbReference>
<dbReference type="PDB" id="9GJW">
    <property type="method" value="EM"/>
    <property type="resolution" value="3.30 A"/>
    <property type="chains" value="B=1-620"/>
</dbReference>
<dbReference type="PDB" id="9GM5">
    <property type="method" value="EM"/>
    <property type="resolution" value="3.70 A"/>
    <property type="chains" value="B=61-620"/>
</dbReference>
<dbReference type="PDBsum" id="5V8F"/>
<dbReference type="PDBsum" id="5ZR1"/>
<dbReference type="PDBsum" id="6RQC"/>
<dbReference type="PDBsum" id="6WGC"/>
<dbReference type="PDBsum" id="6WGG"/>
<dbReference type="PDBsum" id="6WGI"/>
<dbReference type="PDBsum" id="7MCA"/>
<dbReference type="PDBsum" id="7TJF"/>
<dbReference type="PDBsum" id="7TJH"/>
<dbReference type="PDBsum" id="7TJI"/>
<dbReference type="PDBsum" id="7TJJ"/>
<dbReference type="PDBsum" id="7TJK"/>
<dbReference type="PDBsum" id="9BCX"/>
<dbReference type="PDBsum" id="9GJP"/>
<dbReference type="PDBsum" id="9GJW"/>
<dbReference type="PDBsum" id="9GM5"/>
<dbReference type="EMDB" id="EMD-21662"/>
<dbReference type="EMDB" id="EMD-21665"/>
<dbReference type="EMDB" id="EMD-21666"/>
<dbReference type="EMDB" id="EMD-23755"/>
<dbReference type="EMDB" id="EMD-23818"/>
<dbReference type="EMDB" id="EMD-25924"/>
<dbReference type="EMDB" id="EMD-25925"/>
<dbReference type="EMDB" id="EMD-25926"/>
<dbReference type="EMDB" id="EMD-25927"/>
<dbReference type="EMDB" id="EMD-25928"/>
<dbReference type="EMDB" id="EMD-44441"/>
<dbReference type="EMDB" id="EMD-4980"/>
<dbReference type="EMDB" id="EMD-51401"/>
<dbReference type="EMDB" id="EMD-51407"/>
<dbReference type="EMDB" id="EMD-51441"/>
<dbReference type="EMDB" id="EMD-6941"/>
<dbReference type="EMDB" id="EMD-8540"/>
<dbReference type="SMR" id="P32833"/>
<dbReference type="BioGRID" id="32764">
    <property type="interactions" value="697"/>
</dbReference>
<dbReference type="ComplexPortal" id="CPX-768">
    <property type="entry name" value="Nuclear origin recognition complex"/>
</dbReference>
<dbReference type="DIP" id="DIP-2285N"/>
<dbReference type="FunCoup" id="P32833">
    <property type="interactions" value="1266"/>
</dbReference>
<dbReference type="IntAct" id="P32833">
    <property type="interactions" value="20"/>
</dbReference>
<dbReference type="MINT" id="P32833"/>
<dbReference type="STRING" id="4932.YBR060C"/>
<dbReference type="GlyGen" id="P32833">
    <property type="glycosylation" value="2 sites"/>
</dbReference>
<dbReference type="iPTMnet" id="P32833"/>
<dbReference type="PaxDb" id="4932-YBR060C"/>
<dbReference type="PeptideAtlas" id="P32833"/>
<dbReference type="TopDownProteomics" id="P32833"/>
<dbReference type="EnsemblFungi" id="YBR060C_mRNA">
    <property type="protein sequence ID" value="YBR060C"/>
    <property type="gene ID" value="YBR060C"/>
</dbReference>
<dbReference type="GeneID" id="852352"/>
<dbReference type="KEGG" id="sce:YBR060C"/>
<dbReference type="AGR" id="SGD:S000000264"/>
<dbReference type="SGD" id="S000000264">
    <property type="gene designation" value="ORC2"/>
</dbReference>
<dbReference type="VEuPathDB" id="FungiDB:YBR060C"/>
<dbReference type="eggNOG" id="KOG2928">
    <property type="taxonomic scope" value="Eukaryota"/>
</dbReference>
<dbReference type="GeneTree" id="ENSGT00390000015228"/>
<dbReference type="HOGENOM" id="CLU_022671_0_0_1"/>
<dbReference type="InParanoid" id="P32833"/>
<dbReference type="OMA" id="FIEHKMA"/>
<dbReference type="OrthoDB" id="346673at2759"/>
<dbReference type="BioCyc" id="YEAST:G3O-29031-MONOMER"/>
<dbReference type="Reactome" id="R-SCE-176187">
    <property type="pathway name" value="Activation of ATR in response to replication stress"/>
</dbReference>
<dbReference type="Reactome" id="R-SCE-68616">
    <property type="pathway name" value="Assembly of the ORC complex at the origin of replication"/>
</dbReference>
<dbReference type="Reactome" id="R-SCE-68689">
    <property type="pathway name" value="CDC6 association with the ORC:origin complex"/>
</dbReference>
<dbReference type="Reactome" id="R-SCE-68962">
    <property type="pathway name" value="Activation of the pre-replicative complex"/>
</dbReference>
<dbReference type="BioGRID-ORCS" id="852352">
    <property type="hits" value="7 hits in 10 CRISPR screens"/>
</dbReference>
<dbReference type="PRO" id="PR:P32833"/>
<dbReference type="Proteomes" id="UP000002311">
    <property type="component" value="Chromosome II"/>
</dbReference>
<dbReference type="RNAct" id="P32833">
    <property type="molecule type" value="protein"/>
</dbReference>
<dbReference type="GO" id="GO:0000781">
    <property type="term" value="C:chromosome, telomeric region"/>
    <property type="evidence" value="ECO:0007669"/>
    <property type="project" value="GOC"/>
</dbReference>
<dbReference type="GO" id="GO:0031261">
    <property type="term" value="C:DNA replication preinitiation complex"/>
    <property type="evidence" value="ECO:0000314"/>
    <property type="project" value="SGD"/>
</dbReference>
<dbReference type="GO" id="GO:0005664">
    <property type="term" value="C:nuclear origin of replication recognition complex"/>
    <property type="evidence" value="ECO:0000314"/>
    <property type="project" value="SGD"/>
</dbReference>
<dbReference type="GO" id="GO:0005656">
    <property type="term" value="C:nuclear pre-replicative complex"/>
    <property type="evidence" value="ECO:0000314"/>
    <property type="project" value="SGD"/>
</dbReference>
<dbReference type="GO" id="GO:0005654">
    <property type="term" value="C:nucleoplasm"/>
    <property type="evidence" value="ECO:0000304"/>
    <property type="project" value="Reactome"/>
</dbReference>
<dbReference type="GO" id="GO:0005634">
    <property type="term" value="C:nucleus"/>
    <property type="evidence" value="ECO:0000269"/>
    <property type="project" value="ComplexPortal"/>
</dbReference>
<dbReference type="GO" id="GO:0003682">
    <property type="term" value="F:chromatin binding"/>
    <property type="evidence" value="ECO:0000314"/>
    <property type="project" value="SGD"/>
</dbReference>
<dbReference type="GO" id="GO:0003688">
    <property type="term" value="F:DNA replication origin binding"/>
    <property type="evidence" value="ECO:0000314"/>
    <property type="project" value="SGD"/>
</dbReference>
<dbReference type="GO" id="GO:0006270">
    <property type="term" value="P:DNA replication initiation"/>
    <property type="evidence" value="ECO:0000315"/>
    <property type="project" value="SGD"/>
</dbReference>
<dbReference type="GO" id="GO:0006267">
    <property type="term" value="P:pre-replicative complex assembly involved in nuclear cell cycle DNA replication"/>
    <property type="evidence" value="ECO:0000314"/>
    <property type="project" value="SGD"/>
</dbReference>
<dbReference type="GO" id="GO:0030466">
    <property type="term" value="P:silent mating-type cassette heterochromatin formation"/>
    <property type="evidence" value="ECO:0000314"/>
    <property type="project" value="SGD"/>
</dbReference>
<dbReference type="GO" id="GO:0031509">
    <property type="term" value="P:subtelomeric heterochromatin formation"/>
    <property type="evidence" value="ECO:0000315"/>
    <property type="project" value="SGD"/>
</dbReference>
<dbReference type="InterPro" id="IPR007220">
    <property type="entry name" value="ORC2"/>
</dbReference>
<dbReference type="InterPro" id="IPR056772">
    <property type="entry name" value="RecA-like_ORC2"/>
</dbReference>
<dbReference type="InterPro" id="IPR056773">
    <property type="entry name" value="WHD_ORC2"/>
</dbReference>
<dbReference type="PANTHER" id="PTHR14052">
    <property type="entry name" value="ORIGIN RECOGNITION COMPLEX SUBUNIT 2"/>
    <property type="match status" value="1"/>
</dbReference>
<dbReference type="PANTHER" id="PTHR14052:SF0">
    <property type="entry name" value="ORIGIN RECOGNITION COMPLEX SUBUNIT 2"/>
    <property type="match status" value="1"/>
</dbReference>
<dbReference type="Pfam" id="PF04084">
    <property type="entry name" value="RecA-like_ORC2"/>
    <property type="match status" value="1"/>
</dbReference>
<dbReference type="Pfam" id="PF24882">
    <property type="entry name" value="WHD_ORC2"/>
    <property type="match status" value="1"/>
</dbReference>
<feature type="chain" id="PRO_0000127082" description="Origin recognition complex subunit 2">
    <location>
        <begin position="1"/>
        <end position="620"/>
    </location>
</feature>
<feature type="region of interest" description="Disordered" evidence="1">
    <location>
        <begin position="1"/>
        <end position="184"/>
    </location>
</feature>
<feature type="region of interest" description="Disordered" evidence="1">
    <location>
        <begin position="204"/>
        <end position="225"/>
    </location>
</feature>
<feature type="compositionally biased region" description="Polar residues" evidence="1">
    <location>
        <begin position="13"/>
        <end position="23"/>
    </location>
</feature>
<feature type="compositionally biased region" description="Basic and acidic residues" evidence="1">
    <location>
        <begin position="26"/>
        <end position="36"/>
    </location>
</feature>
<feature type="compositionally biased region" description="Basic and acidic residues" evidence="1">
    <location>
        <begin position="83"/>
        <end position="101"/>
    </location>
</feature>
<feature type="compositionally biased region" description="Polar residues" evidence="1">
    <location>
        <begin position="113"/>
        <end position="127"/>
    </location>
</feature>
<feature type="compositionally biased region" description="Basic and acidic residues" evidence="1">
    <location>
        <begin position="128"/>
        <end position="143"/>
    </location>
</feature>
<feature type="compositionally biased region" description="Polar residues" evidence="1">
    <location>
        <begin position="145"/>
        <end position="166"/>
    </location>
</feature>
<feature type="compositionally biased region" description="Polar residues" evidence="1">
    <location>
        <begin position="204"/>
        <end position="218"/>
    </location>
</feature>
<feature type="modified residue" description="Phosphothreonine" evidence="6">
    <location>
        <position position="60"/>
    </location>
</feature>
<feature type="modified residue" description="Phosphothreonine" evidence="6">
    <location>
        <position position="187"/>
    </location>
</feature>
<feature type="modified residue" description="Phosphoserine" evidence="6">
    <location>
        <position position="188"/>
    </location>
</feature>
<feature type="helix" evidence="8">
    <location>
        <begin position="242"/>
        <end position="249"/>
    </location>
</feature>
<feature type="turn" evidence="8">
    <location>
        <begin position="255"/>
        <end position="257"/>
    </location>
</feature>
<feature type="helix" evidence="8">
    <location>
        <begin position="263"/>
        <end position="265"/>
    </location>
</feature>
<feature type="helix" evidence="8">
    <location>
        <begin position="271"/>
        <end position="284"/>
    </location>
</feature>
<feature type="helix" evidence="8">
    <location>
        <begin position="287"/>
        <end position="297"/>
    </location>
</feature>
<feature type="helix" evidence="8">
    <location>
        <begin position="298"/>
        <end position="300"/>
    </location>
</feature>
<feature type="helix" evidence="8">
    <location>
        <begin position="301"/>
        <end position="309"/>
    </location>
</feature>
<feature type="strand" evidence="8">
    <location>
        <begin position="313"/>
        <end position="317"/>
    </location>
</feature>
<feature type="helix" evidence="8">
    <location>
        <begin position="323"/>
        <end position="332"/>
    </location>
</feature>
<feature type="helix" evidence="8">
    <location>
        <begin position="334"/>
        <end position="341"/>
    </location>
</feature>
<feature type="strand" evidence="8">
    <location>
        <begin position="360"/>
        <end position="364"/>
    </location>
</feature>
<feature type="helix" evidence="8">
    <location>
        <begin position="372"/>
        <end position="383"/>
    </location>
</feature>
<feature type="turn" evidence="8">
    <location>
        <begin position="390"/>
        <end position="396"/>
    </location>
</feature>
<feature type="helix" evidence="8">
    <location>
        <begin position="399"/>
        <end position="411"/>
    </location>
</feature>
<feature type="strand" evidence="8">
    <location>
        <begin position="420"/>
        <end position="425"/>
    </location>
</feature>
<feature type="turn" evidence="8">
    <location>
        <begin position="430"/>
        <end position="433"/>
    </location>
</feature>
<feature type="helix" evidence="8">
    <location>
        <begin position="435"/>
        <end position="446"/>
    </location>
</feature>
<feature type="strand" evidence="8">
    <location>
        <begin position="450"/>
        <end position="455"/>
    </location>
</feature>
<feature type="helix" evidence="8">
    <location>
        <begin position="461"/>
        <end position="464"/>
    </location>
</feature>
<feature type="helix" evidence="8">
    <location>
        <begin position="467"/>
        <end position="473"/>
    </location>
</feature>
<feature type="strand" evidence="8">
    <location>
        <begin position="475"/>
        <end position="479"/>
    </location>
</feature>
<feature type="helix" evidence="8">
    <location>
        <begin position="487"/>
        <end position="490"/>
    </location>
</feature>
<feature type="strand" evidence="7">
    <location>
        <begin position="491"/>
        <end position="493"/>
    </location>
</feature>
<feature type="turn" evidence="7">
    <location>
        <begin position="495"/>
        <end position="499"/>
    </location>
</feature>
<feature type="helix" evidence="7">
    <location>
        <begin position="507"/>
        <end position="514"/>
    </location>
</feature>
<feature type="helix" evidence="7">
    <location>
        <begin position="519"/>
        <end position="539"/>
    </location>
</feature>
<feature type="helix" evidence="7">
    <location>
        <begin position="550"/>
        <end position="552"/>
    </location>
</feature>
<feature type="strand" evidence="7">
    <location>
        <begin position="553"/>
        <end position="555"/>
    </location>
</feature>
<feature type="helix" evidence="7">
    <location>
        <begin position="556"/>
        <end position="565"/>
    </location>
</feature>
<feature type="helix" evidence="7">
    <location>
        <begin position="572"/>
        <end position="583"/>
    </location>
</feature>
<feature type="turn" evidence="7">
    <location>
        <begin position="584"/>
        <end position="586"/>
    </location>
</feature>
<feature type="strand" evidence="7">
    <location>
        <begin position="587"/>
        <end position="592"/>
    </location>
</feature>
<feature type="strand" evidence="7">
    <location>
        <begin position="598"/>
        <end position="601"/>
    </location>
</feature>
<feature type="helix" evidence="7">
    <location>
        <begin position="606"/>
        <end position="615"/>
    </location>
</feature>
<feature type="turn" evidence="7">
    <location>
        <begin position="616"/>
        <end position="619"/>
    </location>
</feature>